<comment type="function">
    <text evidence="1">Catalyzes a salvage reaction resulting in the formation of AMP, that is energically less costly than de novo synthesis.</text>
</comment>
<comment type="catalytic activity">
    <reaction evidence="1">
        <text>AMP + diphosphate = 5-phospho-alpha-D-ribose 1-diphosphate + adenine</text>
        <dbReference type="Rhea" id="RHEA:16609"/>
        <dbReference type="ChEBI" id="CHEBI:16708"/>
        <dbReference type="ChEBI" id="CHEBI:33019"/>
        <dbReference type="ChEBI" id="CHEBI:58017"/>
        <dbReference type="ChEBI" id="CHEBI:456215"/>
        <dbReference type="EC" id="2.4.2.7"/>
    </reaction>
</comment>
<comment type="pathway">
    <text evidence="1">Purine metabolism; AMP biosynthesis via salvage pathway; AMP from adenine: step 1/1.</text>
</comment>
<comment type="subunit">
    <text evidence="1">Homodimer.</text>
</comment>
<comment type="subcellular location">
    <subcellularLocation>
        <location evidence="1">Cytoplasm</location>
    </subcellularLocation>
</comment>
<comment type="similarity">
    <text evidence="1">Belongs to the purine/pyrimidine phosphoribosyltransferase family.</text>
</comment>
<accession>Q65ZZ7</accession>
<sequence>MKNKTEYYDQFIAKVPDFPKKGVLFYDITSVLLKPEVYTSLINEAYSFYNLKKIDCIAVVESRGYLIGAPLSLKMQLPLVLIRKEGKLPREVFGEEYELEYGFGKIEVHKDDVRMYSNILLIDDILATGGTLKSSAILLERAGGRVKDIFCFIELCGINGRRILEDYDVNSLVRYN</sequence>
<dbReference type="EC" id="2.4.2.7" evidence="1"/>
<dbReference type="EMBL" id="CP000013">
    <property type="protein sequence ID" value="AAU07624.1"/>
    <property type="molecule type" value="Genomic_DNA"/>
</dbReference>
<dbReference type="RefSeq" id="WP_011194071.1">
    <property type="nucleotide sequence ID" value="NZ_CP028872.1"/>
</dbReference>
<dbReference type="SMR" id="Q65ZZ7"/>
<dbReference type="GeneID" id="45161576"/>
<dbReference type="KEGG" id="bga:BG0801"/>
<dbReference type="eggNOG" id="COG0503">
    <property type="taxonomic scope" value="Bacteria"/>
</dbReference>
<dbReference type="HOGENOM" id="CLU_063339_3_0_12"/>
<dbReference type="OrthoDB" id="9803963at2"/>
<dbReference type="UniPathway" id="UPA00588">
    <property type="reaction ID" value="UER00646"/>
</dbReference>
<dbReference type="Proteomes" id="UP000002276">
    <property type="component" value="Chromosome"/>
</dbReference>
<dbReference type="GO" id="GO:0005737">
    <property type="term" value="C:cytoplasm"/>
    <property type="evidence" value="ECO:0007669"/>
    <property type="project" value="UniProtKB-SubCell"/>
</dbReference>
<dbReference type="GO" id="GO:0003999">
    <property type="term" value="F:adenine phosphoribosyltransferase activity"/>
    <property type="evidence" value="ECO:0007669"/>
    <property type="project" value="UniProtKB-UniRule"/>
</dbReference>
<dbReference type="GO" id="GO:0006168">
    <property type="term" value="P:adenine salvage"/>
    <property type="evidence" value="ECO:0007669"/>
    <property type="project" value="InterPro"/>
</dbReference>
<dbReference type="GO" id="GO:0044209">
    <property type="term" value="P:AMP salvage"/>
    <property type="evidence" value="ECO:0007669"/>
    <property type="project" value="UniProtKB-UniRule"/>
</dbReference>
<dbReference type="GO" id="GO:0006166">
    <property type="term" value="P:purine ribonucleoside salvage"/>
    <property type="evidence" value="ECO:0007669"/>
    <property type="project" value="UniProtKB-KW"/>
</dbReference>
<dbReference type="CDD" id="cd06223">
    <property type="entry name" value="PRTases_typeI"/>
    <property type="match status" value="1"/>
</dbReference>
<dbReference type="FunFam" id="3.40.50.2020:FF:000004">
    <property type="entry name" value="Adenine phosphoribosyltransferase"/>
    <property type="match status" value="1"/>
</dbReference>
<dbReference type="Gene3D" id="3.40.50.2020">
    <property type="match status" value="1"/>
</dbReference>
<dbReference type="HAMAP" id="MF_00004">
    <property type="entry name" value="Aden_phosphoribosyltr"/>
    <property type="match status" value="1"/>
</dbReference>
<dbReference type="InterPro" id="IPR005764">
    <property type="entry name" value="Ade_phspho_trans"/>
</dbReference>
<dbReference type="InterPro" id="IPR050120">
    <property type="entry name" value="Adenine_PRTase"/>
</dbReference>
<dbReference type="InterPro" id="IPR000836">
    <property type="entry name" value="PRibTrfase_dom"/>
</dbReference>
<dbReference type="InterPro" id="IPR029057">
    <property type="entry name" value="PRTase-like"/>
</dbReference>
<dbReference type="NCBIfam" id="NF002636">
    <property type="entry name" value="PRK02304.1-5"/>
    <property type="match status" value="1"/>
</dbReference>
<dbReference type="PANTHER" id="PTHR11776">
    <property type="entry name" value="ADENINE PHOSPHORIBOSYLTRANSFERASE"/>
    <property type="match status" value="1"/>
</dbReference>
<dbReference type="PANTHER" id="PTHR11776:SF7">
    <property type="entry name" value="PHOSPHORIBOSYLTRANSFERASE DOMAIN-CONTAINING PROTEIN"/>
    <property type="match status" value="1"/>
</dbReference>
<dbReference type="Pfam" id="PF00156">
    <property type="entry name" value="Pribosyltran"/>
    <property type="match status" value="1"/>
</dbReference>
<dbReference type="SUPFAM" id="SSF53271">
    <property type="entry name" value="PRTase-like"/>
    <property type="match status" value="1"/>
</dbReference>
<dbReference type="PROSITE" id="PS00103">
    <property type="entry name" value="PUR_PYR_PR_TRANSFER"/>
    <property type="match status" value="1"/>
</dbReference>
<protein>
    <recommendedName>
        <fullName evidence="1">Adenine phosphoribosyltransferase</fullName>
        <shortName evidence="1">APRT</shortName>
        <ecNumber evidence="1">2.4.2.7</ecNumber>
    </recommendedName>
</protein>
<feature type="chain" id="PRO_0000149360" description="Adenine phosphoribosyltransferase">
    <location>
        <begin position="1"/>
        <end position="176"/>
    </location>
</feature>
<keyword id="KW-0963">Cytoplasm</keyword>
<keyword id="KW-0328">Glycosyltransferase</keyword>
<keyword id="KW-0660">Purine salvage</keyword>
<keyword id="KW-0808">Transferase</keyword>
<proteinExistence type="inferred from homology"/>
<gene>
    <name evidence="1" type="primary">apt</name>
    <name type="ordered locus">BG0801</name>
</gene>
<reference key="1">
    <citation type="journal article" date="2004" name="Nucleic Acids Res.">
        <title>Comparative analysis of the Borrelia garinii genome.</title>
        <authorList>
            <person name="Gloeckner G."/>
            <person name="Lehmann R."/>
            <person name="Romualdi A."/>
            <person name="Pradella S."/>
            <person name="Schulte-Spechtel U."/>
            <person name="Schilhabel M."/>
            <person name="Wilske B."/>
            <person name="Suehnel J."/>
            <person name="Platzer M."/>
        </authorList>
    </citation>
    <scope>NUCLEOTIDE SEQUENCE [LARGE SCALE GENOMIC DNA]</scope>
    <source>
        <strain>ATCC BAA-2496 / DSM 23469 / PBi</strain>
    </source>
</reference>
<name>APT_BORGP</name>
<organism>
    <name type="scientific">Borrelia garinii subsp. bavariensis (strain ATCC BAA-2496 / DSM 23469 / PBi)</name>
    <name type="common">Borreliella bavariensis</name>
    <dbReference type="NCBI Taxonomy" id="290434"/>
    <lineage>
        <taxon>Bacteria</taxon>
        <taxon>Pseudomonadati</taxon>
        <taxon>Spirochaetota</taxon>
        <taxon>Spirochaetia</taxon>
        <taxon>Spirochaetales</taxon>
        <taxon>Borreliaceae</taxon>
        <taxon>Borreliella</taxon>
    </lineage>
</organism>
<evidence type="ECO:0000255" key="1">
    <source>
        <dbReference type="HAMAP-Rule" id="MF_00004"/>
    </source>
</evidence>